<dbReference type="EC" id="6.1.1.3" evidence="1"/>
<dbReference type="EMBL" id="AE006468">
    <property type="protein sequence ID" value="AAL20258.1"/>
    <property type="molecule type" value="Genomic_DNA"/>
</dbReference>
<dbReference type="RefSeq" id="NP_460299.1">
    <property type="nucleotide sequence ID" value="NC_003197.2"/>
</dbReference>
<dbReference type="RefSeq" id="WP_001144223.1">
    <property type="nucleotide sequence ID" value="NC_003197.2"/>
</dbReference>
<dbReference type="SMR" id="Q8ZPS9"/>
<dbReference type="STRING" id="99287.STM1333"/>
<dbReference type="PaxDb" id="99287-STM1333"/>
<dbReference type="GeneID" id="1252851"/>
<dbReference type="KEGG" id="stm:STM1333"/>
<dbReference type="PATRIC" id="fig|99287.12.peg.1416"/>
<dbReference type="HOGENOM" id="CLU_008554_0_1_6"/>
<dbReference type="OMA" id="WYADGMY"/>
<dbReference type="PhylomeDB" id="Q8ZPS9"/>
<dbReference type="BioCyc" id="SENT99287:STM1333-MONOMER"/>
<dbReference type="Proteomes" id="UP000001014">
    <property type="component" value="Chromosome"/>
</dbReference>
<dbReference type="GO" id="GO:0005829">
    <property type="term" value="C:cytosol"/>
    <property type="evidence" value="ECO:0000318"/>
    <property type="project" value="GO_Central"/>
</dbReference>
<dbReference type="GO" id="GO:0005524">
    <property type="term" value="F:ATP binding"/>
    <property type="evidence" value="ECO:0007669"/>
    <property type="project" value="UniProtKB-UniRule"/>
</dbReference>
<dbReference type="GO" id="GO:0046872">
    <property type="term" value="F:metal ion binding"/>
    <property type="evidence" value="ECO:0007669"/>
    <property type="project" value="UniProtKB-KW"/>
</dbReference>
<dbReference type="GO" id="GO:0004829">
    <property type="term" value="F:threonine-tRNA ligase activity"/>
    <property type="evidence" value="ECO:0000318"/>
    <property type="project" value="GO_Central"/>
</dbReference>
<dbReference type="GO" id="GO:0000049">
    <property type="term" value="F:tRNA binding"/>
    <property type="evidence" value="ECO:0007669"/>
    <property type="project" value="UniProtKB-KW"/>
</dbReference>
<dbReference type="GO" id="GO:0006435">
    <property type="term" value="P:threonyl-tRNA aminoacylation"/>
    <property type="evidence" value="ECO:0000318"/>
    <property type="project" value="GO_Central"/>
</dbReference>
<dbReference type="CDD" id="cd01667">
    <property type="entry name" value="TGS_ThrRS"/>
    <property type="match status" value="1"/>
</dbReference>
<dbReference type="CDD" id="cd00860">
    <property type="entry name" value="ThrRS_anticodon"/>
    <property type="match status" value="1"/>
</dbReference>
<dbReference type="CDD" id="cd00771">
    <property type="entry name" value="ThrRS_core"/>
    <property type="match status" value="1"/>
</dbReference>
<dbReference type="FunFam" id="3.10.20.30:FF:000005">
    <property type="entry name" value="Threonine--tRNA ligase"/>
    <property type="match status" value="1"/>
</dbReference>
<dbReference type="FunFam" id="3.30.54.20:FF:000002">
    <property type="entry name" value="Threonine--tRNA ligase"/>
    <property type="match status" value="1"/>
</dbReference>
<dbReference type="FunFam" id="3.30.930.10:FF:000002">
    <property type="entry name" value="Threonine--tRNA ligase"/>
    <property type="match status" value="1"/>
</dbReference>
<dbReference type="FunFam" id="3.40.50.800:FF:000001">
    <property type="entry name" value="Threonine--tRNA ligase"/>
    <property type="match status" value="1"/>
</dbReference>
<dbReference type="FunFam" id="3.30.980.10:FF:000005">
    <property type="entry name" value="Threonyl-tRNA synthetase, mitochondrial"/>
    <property type="match status" value="1"/>
</dbReference>
<dbReference type="Gene3D" id="3.10.20.30">
    <property type="match status" value="1"/>
</dbReference>
<dbReference type="Gene3D" id="3.30.54.20">
    <property type="match status" value="1"/>
</dbReference>
<dbReference type="Gene3D" id="3.40.50.800">
    <property type="entry name" value="Anticodon-binding domain"/>
    <property type="match status" value="1"/>
</dbReference>
<dbReference type="Gene3D" id="3.30.930.10">
    <property type="entry name" value="Bira Bifunctional Protein, Domain 2"/>
    <property type="match status" value="1"/>
</dbReference>
<dbReference type="Gene3D" id="3.30.980.10">
    <property type="entry name" value="Threonyl-trna Synthetase, Chain A, domain 2"/>
    <property type="match status" value="1"/>
</dbReference>
<dbReference type="HAMAP" id="MF_00184">
    <property type="entry name" value="Thr_tRNA_synth"/>
    <property type="match status" value="1"/>
</dbReference>
<dbReference type="InterPro" id="IPR002314">
    <property type="entry name" value="aa-tRNA-synt_IIb"/>
</dbReference>
<dbReference type="InterPro" id="IPR006195">
    <property type="entry name" value="aa-tRNA-synth_II"/>
</dbReference>
<dbReference type="InterPro" id="IPR045864">
    <property type="entry name" value="aa-tRNA-synth_II/BPL/LPL"/>
</dbReference>
<dbReference type="InterPro" id="IPR004154">
    <property type="entry name" value="Anticodon-bd"/>
</dbReference>
<dbReference type="InterPro" id="IPR036621">
    <property type="entry name" value="Anticodon-bd_dom_sf"/>
</dbReference>
<dbReference type="InterPro" id="IPR012675">
    <property type="entry name" value="Beta-grasp_dom_sf"/>
</dbReference>
<dbReference type="InterPro" id="IPR004095">
    <property type="entry name" value="TGS"/>
</dbReference>
<dbReference type="InterPro" id="IPR012676">
    <property type="entry name" value="TGS-like"/>
</dbReference>
<dbReference type="InterPro" id="IPR002320">
    <property type="entry name" value="Thr-tRNA-ligase_IIa"/>
</dbReference>
<dbReference type="InterPro" id="IPR018163">
    <property type="entry name" value="Thr/Ala-tRNA-synth_IIc_edit"/>
</dbReference>
<dbReference type="InterPro" id="IPR047246">
    <property type="entry name" value="ThrRS_anticodon"/>
</dbReference>
<dbReference type="InterPro" id="IPR033728">
    <property type="entry name" value="ThrRS_core"/>
</dbReference>
<dbReference type="InterPro" id="IPR012947">
    <property type="entry name" value="tRNA_SAD"/>
</dbReference>
<dbReference type="NCBIfam" id="TIGR00418">
    <property type="entry name" value="thrS"/>
    <property type="match status" value="1"/>
</dbReference>
<dbReference type="PANTHER" id="PTHR11451:SF44">
    <property type="entry name" value="THREONINE--TRNA LIGASE, CHLOROPLASTIC_MITOCHONDRIAL 2"/>
    <property type="match status" value="1"/>
</dbReference>
<dbReference type="PANTHER" id="PTHR11451">
    <property type="entry name" value="THREONINE-TRNA LIGASE"/>
    <property type="match status" value="1"/>
</dbReference>
<dbReference type="Pfam" id="PF03129">
    <property type="entry name" value="HGTP_anticodon"/>
    <property type="match status" value="1"/>
</dbReference>
<dbReference type="Pfam" id="PF02824">
    <property type="entry name" value="TGS"/>
    <property type="match status" value="1"/>
</dbReference>
<dbReference type="Pfam" id="PF00587">
    <property type="entry name" value="tRNA-synt_2b"/>
    <property type="match status" value="1"/>
</dbReference>
<dbReference type="Pfam" id="PF07973">
    <property type="entry name" value="tRNA_SAD"/>
    <property type="match status" value="1"/>
</dbReference>
<dbReference type="PRINTS" id="PR01047">
    <property type="entry name" value="TRNASYNTHTHR"/>
</dbReference>
<dbReference type="SMART" id="SM00863">
    <property type="entry name" value="tRNA_SAD"/>
    <property type="match status" value="1"/>
</dbReference>
<dbReference type="SUPFAM" id="SSF52954">
    <property type="entry name" value="Class II aaRS ABD-related"/>
    <property type="match status" value="1"/>
</dbReference>
<dbReference type="SUPFAM" id="SSF55681">
    <property type="entry name" value="Class II aaRS and biotin synthetases"/>
    <property type="match status" value="1"/>
</dbReference>
<dbReference type="SUPFAM" id="SSF81271">
    <property type="entry name" value="TGS-like"/>
    <property type="match status" value="1"/>
</dbReference>
<dbReference type="SUPFAM" id="SSF55186">
    <property type="entry name" value="ThrRS/AlaRS common domain"/>
    <property type="match status" value="1"/>
</dbReference>
<dbReference type="PROSITE" id="PS50862">
    <property type="entry name" value="AA_TRNA_LIGASE_II"/>
    <property type="match status" value="1"/>
</dbReference>
<dbReference type="PROSITE" id="PS51880">
    <property type="entry name" value="TGS"/>
    <property type="match status" value="1"/>
</dbReference>
<organism>
    <name type="scientific">Salmonella typhimurium (strain LT2 / SGSC1412 / ATCC 700720)</name>
    <dbReference type="NCBI Taxonomy" id="99287"/>
    <lineage>
        <taxon>Bacteria</taxon>
        <taxon>Pseudomonadati</taxon>
        <taxon>Pseudomonadota</taxon>
        <taxon>Gammaproteobacteria</taxon>
        <taxon>Enterobacterales</taxon>
        <taxon>Enterobacteriaceae</taxon>
        <taxon>Salmonella</taxon>
    </lineage>
</organism>
<comment type="function">
    <text evidence="1">Catalyzes the attachment of threonine to tRNA(Thr) in a two-step reaction: L-threonine is first activated by ATP to form Thr-AMP and then transferred to the acceptor end of tRNA(Thr). Also edits incorrectly charged L-seryl-tRNA(Thr).</text>
</comment>
<comment type="catalytic activity">
    <reaction evidence="1">
        <text>tRNA(Thr) + L-threonine + ATP = L-threonyl-tRNA(Thr) + AMP + diphosphate + H(+)</text>
        <dbReference type="Rhea" id="RHEA:24624"/>
        <dbReference type="Rhea" id="RHEA-COMP:9670"/>
        <dbReference type="Rhea" id="RHEA-COMP:9704"/>
        <dbReference type="ChEBI" id="CHEBI:15378"/>
        <dbReference type="ChEBI" id="CHEBI:30616"/>
        <dbReference type="ChEBI" id="CHEBI:33019"/>
        <dbReference type="ChEBI" id="CHEBI:57926"/>
        <dbReference type="ChEBI" id="CHEBI:78442"/>
        <dbReference type="ChEBI" id="CHEBI:78534"/>
        <dbReference type="ChEBI" id="CHEBI:456215"/>
        <dbReference type="EC" id="6.1.1.3"/>
    </reaction>
</comment>
<comment type="cofactor">
    <cofactor evidence="1">
        <name>Zn(2+)</name>
        <dbReference type="ChEBI" id="CHEBI:29105"/>
    </cofactor>
    <text evidence="1">Binds 1 zinc ion per subunit.</text>
</comment>
<comment type="subunit">
    <text evidence="1">Homodimer.</text>
</comment>
<comment type="subcellular location">
    <subcellularLocation>
        <location evidence="1">Cytoplasm</location>
    </subcellularLocation>
</comment>
<comment type="similarity">
    <text evidence="1">Belongs to the class-II aminoacyl-tRNA synthetase family.</text>
</comment>
<reference key="1">
    <citation type="journal article" date="2001" name="Nature">
        <title>Complete genome sequence of Salmonella enterica serovar Typhimurium LT2.</title>
        <authorList>
            <person name="McClelland M."/>
            <person name="Sanderson K.E."/>
            <person name="Spieth J."/>
            <person name="Clifton S.W."/>
            <person name="Latreille P."/>
            <person name="Courtney L."/>
            <person name="Porwollik S."/>
            <person name="Ali J."/>
            <person name="Dante M."/>
            <person name="Du F."/>
            <person name="Hou S."/>
            <person name="Layman D."/>
            <person name="Leonard S."/>
            <person name="Nguyen C."/>
            <person name="Scott K."/>
            <person name="Holmes A."/>
            <person name="Grewal N."/>
            <person name="Mulvaney E."/>
            <person name="Ryan E."/>
            <person name="Sun H."/>
            <person name="Florea L."/>
            <person name="Miller W."/>
            <person name="Stoneking T."/>
            <person name="Nhan M."/>
            <person name="Waterston R."/>
            <person name="Wilson R.K."/>
        </authorList>
    </citation>
    <scope>NUCLEOTIDE SEQUENCE [LARGE SCALE GENOMIC DNA]</scope>
    <source>
        <strain>LT2 / SGSC1412 / ATCC 700720</strain>
    </source>
</reference>
<name>SYT_SALTY</name>
<feature type="chain" id="PRO_0000101043" description="Threonine--tRNA ligase">
    <location>
        <begin position="1"/>
        <end position="642"/>
    </location>
</feature>
<feature type="domain" description="TGS" evidence="2">
    <location>
        <begin position="1"/>
        <end position="61"/>
    </location>
</feature>
<feature type="region of interest" description="Catalytic" evidence="1">
    <location>
        <begin position="243"/>
        <end position="534"/>
    </location>
</feature>
<feature type="binding site" evidence="1">
    <location>
        <position position="334"/>
    </location>
    <ligand>
        <name>Zn(2+)</name>
        <dbReference type="ChEBI" id="CHEBI:29105"/>
    </ligand>
</feature>
<feature type="binding site" evidence="1">
    <location>
        <position position="385"/>
    </location>
    <ligand>
        <name>Zn(2+)</name>
        <dbReference type="ChEBI" id="CHEBI:29105"/>
    </ligand>
</feature>
<feature type="binding site" evidence="1">
    <location>
        <position position="511"/>
    </location>
    <ligand>
        <name>Zn(2+)</name>
        <dbReference type="ChEBI" id="CHEBI:29105"/>
    </ligand>
</feature>
<accession>Q8ZPS9</accession>
<evidence type="ECO:0000255" key="1">
    <source>
        <dbReference type="HAMAP-Rule" id="MF_00184"/>
    </source>
</evidence>
<evidence type="ECO:0000255" key="2">
    <source>
        <dbReference type="PROSITE-ProRule" id="PRU01228"/>
    </source>
</evidence>
<sequence length="642" mass="73978">MPVITLPDGSQRHYDHPVSPMDVALDIGPGLAKATIAGRVNGELVDASDLIENDATLSIITAKDEEGLEIIRHSCAHLLGHAIKQLWPHTKMAIGPVVDNGFYYDVDLDRTLTQEDVEALEKRMHELAEKNYDVIKKKVSWHDARETFVKRGETYKVAILDENIAHDDKPGLYHHEEYVDMCRGPHVPNMRFCHHFKLMKTAGAYWRGDSNNKMLQRIYGTAWADKKALNAYLQRLEEAAKRDHRKIGKQLDLYHMQEEAPGMVFWHNDGWTIFRELEVFVRSKLKEYQYQEVKGPFMMDRVLWEKTGHWDNYKDAMFTTSSENREYCIKPMNCPGHVQIFNQGLKSYRDLPLRMAEFGSCHRNEPSGALHGLMRVRGFTQDDAHIFCTEEQIRDEVNACIRMVYDMYSTFGFEKIVVKLSTRPDKRIGSDEMWDRAEADLAVALEENNIPFEYQLGEGAFYGPKIEFTLYDCLDRAWQCGTVQLDFSLPSRLSASYVGEDNERKVPVMIHRAILGSMERFIGILTEEFAGFFPTWLAPVQVVVMNITDSQSEYVNELTQKLQNAGIRVKADLRNEKIGFKIREHTLRRVPYMLVCGDKEVEAGKVAVRTRRGKDLGSLDVNDVIEKLQQEIRSRSLQQLEE</sequence>
<keyword id="KW-0030">Aminoacyl-tRNA synthetase</keyword>
<keyword id="KW-0067">ATP-binding</keyword>
<keyword id="KW-0963">Cytoplasm</keyword>
<keyword id="KW-0436">Ligase</keyword>
<keyword id="KW-0479">Metal-binding</keyword>
<keyword id="KW-0547">Nucleotide-binding</keyword>
<keyword id="KW-0648">Protein biosynthesis</keyword>
<keyword id="KW-1185">Reference proteome</keyword>
<keyword id="KW-0694">RNA-binding</keyword>
<keyword id="KW-0820">tRNA-binding</keyword>
<keyword id="KW-0862">Zinc</keyword>
<proteinExistence type="inferred from homology"/>
<gene>
    <name evidence="1" type="primary">thrS</name>
    <name type="ordered locus">STM1333</name>
</gene>
<protein>
    <recommendedName>
        <fullName evidence="1">Threonine--tRNA ligase</fullName>
        <ecNumber evidence="1">6.1.1.3</ecNumber>
    </recommendedName>
    <alternativeName>
        <fullName evidence="1">Threonyl-tRNA synthetase</fullName>
        <shortName evidence="1">ThrRS</shortName>
    </alternativeName>
</protein>